<comment type="function">
    <text evidence="1">Formation of pseudouridine at positions 38, 39 and 40 in the anticodon stem and loop of transfer RNAs.</text>
</comment>
<comment type="catalytic activity">
    <reaction evidence="1">
        <text>uridine(38/39/40) in tRNA = pseudouridine(38/39/40) in tRNA</text>
        <dbReference type="Rhea" id="RHEA:22376"/>
        <dbReference type="Rhea" id="RHEA-COMP:10085"/>
        <dbReference type="Rhea" id="RHEA-COMP:10087"/>
        <dbReference type="ChEBI" id="CHEBI:65314"/>
        <dbReference type="ChEBI" id="CHEBI:65315"/>
        <dbReference type="EC" id="5.4.99.12"/>
    </reaction>
</comment>
<comment type="subunit">
    <text evidence="1">Homodimer.</text>
</comment>
<comment type="similarity">
    <text evidence="1">Belongs to the tRNA pseudouridine synthase TruA family.</text>
</comment>
<reference key="1">
    <citation type="submission" date="2004-06" db="EMBL/GenBank/DDBJ databases">
        <authorList>
            <person name="Birren B.W."/>
            <person name="Stange-Thomann N."/>
            <person name="Hafez N."/>
            <person name="DeCaprio D."/>
            <person name="Fisher S."/>
            <person name="Butler J."/>
            <person name="Elkins T."/>
            <person name="Kodira C.D."/>
            <person name="Major J."/>
            <person name="Wang S."/>
            <person name="Nicol R."/>
            <person name="Nusbaum C."/>
        </authorList>
    </citation>
    <scope>NUCLEOTIDE SEQUENCE [LARGE SCALE GENOMIC DNA]</scope>
    <source>
        <strain>ATCC 33453 / NBRC 100688 / NCTC 11704 / L1</strain>
    </source>
</reference>
<dbReference type="EC" id="5.4.99.12" evidence="1"/>
<dbReference type="EMBL" id="AE017263">
    <property type="protein sequence ID" value="AAT75511.1"/>
    <property type="molecule type" value="Genomic_DNA"/>
</dbReference>
<dbReference type="RefSeq" id="WP_011183052.1">
    <property type="nucleotide sequence ID" value="NC_006055.1"/>
</dbReference>
<dbReference type="RefSeq" id="YP_053395.1">
    <property type="nucleotide sequence ID" value="NC_006055.1"/>
</dbReference>
<dbReference type="SMR" id="Q6F1W2"/>
<dbReference type="STRING" id="265311.Mfl155"/>
<dbReference type="PaxDb" id="265311-Mfl155"/>
<dbReference type="EnsemblBacteria" id="AAT75511">
    <property type="protein sequence ID" value="AAT75511"/>
    <property type="gene ID" value="Mfl155"/>
</dbReference>
<dbReference type="GeneID" id="2897702"/>
<dbReference type="KEGG" id="mfl:Mfl155"/>
<dbReference type="PATRIC" id="fig|265311.5.peg.156"/>
<dbReference type="eggNOG" id="COG0101">
    <property type="taxonomic scope" value="Bacteria"/>
</dbReference>
<dbReference type="HOGENOM" id="CLU_014673_0_1_14"/>
<dbReference type="OrthoDB" id="9811823at2"/>
<dbReference type="Proteomes" id="UP000006647">
    <property type="component" value="Chromosome"/>
</dbReference>
<dbReference type="GO" id="GO:0003723">
    <property type="term" value="F:RNA binding"/>
    <property type="evidence" value="ECO:0007669"/>
    <property type="project" value="InterPro"/>
</dbReference>
<dbReference type="GO" id="GO:0160147">
    <property type="term" value="F:tRNA pseudouridine(38-40) synthase activity"/>
    <property type="evidence" value="ECO:0007669"/>
    <property type="project" value="UniProtKB-EC"/>
</dbReference>
<dbReference type="GO" id="GO:0031119">
    <property type="term" value="P:tRNA pseudouridine synthesis"/>
    <property type="evidence" value="ECO:0007669"/>
    <property type="project" value="UniProtKB-UniRule"/>
</dbReference>
<dbReference type="CDD" id="cd02570">
    <property type="entry name" value="PseudoU_synth_EcTruA"/>
    <property type="match status" value="1"/>
</dbReference>
<dbReference type="Gene3D" id="3.30.70.660">
    <property type="entry name" value="Pseudouridine synthase I, catalytic domain, C-terminal subdomain"/>
    <property type="match status" value="1"/>
</dbReference>
<dbReference type="Gene3D" id="3.30.70.580">
    <property type="entry name" value="Pseudouridine synthase I, catalytic domain, N-terminal subdomain"/>
    <property type="match status" value="1"/>
</dbReference>
<dbReference type="HAMAP" id="MF_00171">
    <property type="entry name" value="TruA"/>
    <property type="match status" value="1"/>
</dbReference>
<dbReference type="InterPro" id="IPR020103">
    <property type="entry name" value="PsdUridine_synth_cat_dom_sf"/>
</dbReference>
<dbReference type="InterPro" id="IPR001406">
    <property type="entry name" value="PsdUridine_synth_TruA"/>
</dbReference>
<dbReference type="InterPro" id="IPR020097">
    <property type="entry name" value="PsdUridine_synth_TruA_a/b_dom"/>
</dbReference>
<dbReference type="InterPro" id="IPR020095">
    <property type="entry name" value="PsdUridine_synth_TruA_C"/>
</dbReference>
<dbReference type="InterPro" id="IPR020094">
    <property type="entry name" value="TruA/RsuA/RluB/E/F_N"/>
</dbReference>
<dbReference type="NCBIfam" id="TIGR00071">
    <property type="entry name" value="hisT_truA"/>
    <property type="match status" value="1"/>
</dbReference>
<dbReference type="PANTHER" id="PTHR11142">
    <property type="entry name" value="PSEUDOURIDYLATE SYNTHASE"/>
    <property type="match status" value="1"/>
</dbReference>
<dbReference type="PANTHER" id="PTHR11142:SF0">
    <property type="entry name" value="TRNA PSEUDOURIDINE SYNTHASE-LIKE 1"/>
    <property type="match status" value="1"/>
</dbReference>
<dbReference type="Pfam" id="PF01416">
    <property type="entry name" value="PseudoU_synth_1"/>
    <property type="match status" value="2"/>
</dbReference>
<dbReference type="PIRSF" id="PIRSF001430">
    <property type="entry name" value="tRNA_psdUrid_synth"/>
    <property type="match status" value="1"/>
</dbReference>
<dbReference type="SUPFAM" id="SSF55120">
    <property type="entry name" value="Pseudouridine synthase"/>
    <property type="match status" value="1"/>
</dbReference>
<feature type="chain" id="PRO_0000057406" description="tRNA pseudouridine synthase A">
    <location>
        <begin position="1"/>
        <end position="251"/>
    </location>
</feature>
<feature type="active site" description="Nucleophile" evidence="1">
    <location>
        <position position="53"/>
    </location>
</feature>
<feature type="binding site" evidence="1">
    <location>
        <position position="110"/>
    </location>
    <ligand>
        <name>substrate</name>
    </ligand>
</feature>
<name>TRUA_MESFL</name>
<protein>
    <recommendedName>
        <fullName evidence="1">tRNA pseudouridine synthase A</fullName>
        <ecNumber evidence="1">5.4.99.12</ecNumber>
    </recommendedName>
    <alternativeName>
        <fullName evidence="1">tRNA pseudouridine(38-40) synthase</fullName>
    </alternativeName>
    <alternativeName>
        <fullName evidence="1">tRNA pseudouridylate synthase I</fullName>
    </alternativeName>
    <alternativeName>
        <fullName evidence="1">tRNA-uridine isomerase I</fullName>
    </alternativeName>
</protein>
<sequence length="251" mass="29013">MFKFLITLEYDGSDFHGWIEQPKTSTIQGELNKAINRVTKNAVFKTIGASKTDTGVHAIDQKVLLDLGFNPKLDLFKKAINKALPETIKVRSIEEVKQDFNIRDVLYKEYSYTINDKEYNILSNRFELNWDFEEIDIDKLQNIFNLFIGEHEFKLFSGLNHKELDSNKITTIREIESIDVKRALDKVVITFKAKGFIRYQIRMIVQSALNCYLNKKISADEIKEKLQGKGNKPPFNAPAKGLKLNKIVFKS</sequence>
<keyword id="KW-0413">Isomerase</keyword>
<keyword id="KW-1185">Reference proteome</keyword>
<keyword id="KW-0819">tRNA processing</keyword>
<gene>
    <name evidence="1" type="primary">truA</name>
    <name type="ordered locus">Mfl155</name>
</gene>
<proteinExistence type="inferred from homology"/>
<organism>
    <name type="scientific">Mesoplasma florum (strain ATCC 33453 / NBRC 100688 / NCTC 11704 / L1)</name>
    <name type="common">Acholeplasma florum</name>
    <dbReference type="NCBI Taxonomy" id="265311"/>
    <lineage>
        <taxon>Bacteria</taxon>
        <taxon>Bacillati</taxon>
        <taxon>Mycoplasmatota</taxon>
        <taxon>Mollicutes</taxon>
        <taxon>Entomoplasmatales</taxon>
        <taxon>Entomoplasmataceae</taxon>
        <taxon>Mesoplasma</taxon>
    </lineage>
</organism>
<evidence type="ECO:0000255" key="1">
    <source>
        <dbReference type="HAMAP-Rule" id="MF_00171"/>
    </source>
</evidence>
<accession>Q6F1W2</accession>